<evidence type="ECO:0000255" key="1">
    <source>
        <dbReference type="HAMAP-Rule" id="MF_01538"/>
    </source>
</evidence>
<evidence type="ECO:0000305" key="2"/>
<name>Y369_STRPM</name>
<feature type="chain" id="PRO_0000292798" description="UPF0346 protein M28_Spy0369">
    <location>
        <begin position="1"/>
        <end position="83"/>
    </location>
</feature>
<reference key="1">
    <citation type="journal article" date="2005" name="J. Infect. Dis.">
        <title>Genome sequence of a serotype M28 strain of group A Streptococcus: potential new insights into puerperal sepsis and bacterial disease specificity.</title>
        <authorList>
            <person name="Green N.M."/>
            <person name="Zhang S."/>
            <person name="Porcella S.F."/>
            <person name="Nagiec M.J."/>
            <person name="Barbian K.D."/>
            <person name="Beres S.B."/>
            <person name="Lefebvre R.B."/>
            <person name="Musser J.M."/>
        </authorList>
    </citation>
    <scope>NUCLEOTIDE SEQUENCE [LARGE SCALE GENOMIC DNA]</scope>
    <source>
        <strain>MGAS6180</strain>
    </source>
</reference>
<comment type="similarity">
    <text evidence="1">Belongs to the UPF0346 family.</text>
</comment>
<comment type="sequence caution" evidence="2">
    <conflict type="erroneous initiation">
        <sequence resource="EMBL-CDS" id="AAX71483"/>
    </conflict>
</comment>
<proteinExistence type="inferred from homology"/>
<sequence>MRKSFYSWLMTQRNPKSNAPVAILADLVFDDTTFPKHTNDFELISRYLEDQASFSFNLGQFDEIWEDYLAHQYVDKKESYRLF</sequence>
<accession>Q48UX3</accession>
<dbReference type="EMBL" id="CP000056">
    <property type="protein sequence ID" value="AAX71483.1"/>
    <property type="status" value="ALT_INIT"/>
    <property type="molecule type" value="Genomic_DNA"/>
</dbReference>
<dbReference type="SMR" id="Q48UX3"/>
<dbReference type="KEGG" id="spb:M28_Spy0369"/>
<dbReference type="HOGENOM" id="CLU_177534_1_0_9"/>
<dbReference type="Gene3D" id="1.10.150.260">
    <property type="entry name" value="YozE SAM-like"/>
    <property type="match status" value="1"/>
</dbReference>
<dbReference type="HAMAP" id="MF_01538">
    <property type="entry name" value="UPF0346"/>
    <property type="match status" value="1"/>
</dbReference>
<dbReference type="InterPro" id="IPR010673">
    <property type="entry name" value="UPF0346"/>
</dbReference>
<dbReference type="InterPro" id="IPR023089">
    <property type="entry name" value="YozE_SAM-like"/>
</dbReference>
<dbReference type="InterPro" id="IPR036806">
    <property type="entry name" value="YozE_SAM-like_sf"/>
</dbReference>
<dbReference type="NCBIfam" id="NF010193">
    <property type="entry name" value="PRK13672.1"/>
    <property type="match status" value="1"/>
</dbReference>
<dbReference type="Pfam" id="PF06855">
    <property type="entry name" value="YozE_SAM_like"/>
    <property type="match status" value="1"/>
</dbReference>
<dbReference type="PIRSF" id="PIRSF037262">
    <property type="entry name" value="UCP037262"/>
    <property type="match status" value="1"/>
</dbReference>
<dbReference type="SUPFAM" id="SSF140652">
    <property type="entry name" value="YozE-like"/>
    <property type="match status" value="1"/>
</dbReference>
<protein>
    <recommendedName>
        <fullName evidence="1">UPF0346 protein M28_Spy0369</fullName>
    </recommendedName>
</protein>
<gene>
    <name type="ordered locus">M28_Spy0369</name>
</gene>
<organism>
    <name type="scientific">Streptococcus pyogenes serotype M28 (strain MGAS6180)</name>
    <dbReference type="NCBI Taxonomy" id="319701"/>
    <lineage>
        <taxon>Bacteria</taxon>
        <taxon>Bacillati</taxon>
        <taxon>Bacillota</taxon>
        <taxon>Bacilli</taxon>
        <taxon>Lactobacillales</taxon>
        <taxon>Streptococcaceae</taxon>
        <taxon>Streptococcus</taxon>
    </lineage>
</organism>